<accession>P42692</accession>
<feature type="chain" id="PRO_0000148923" description="Somatoliberin">
    <location>
        <begin position="1"/>
        <end position="45"/>
    </location>
</feature>
<name>SLIB_CYPCA</name>
<gene>
    <name type="primary">ghrh</name>
</gene>
<sequence>HADGMFNKAYRKALGQLSARKYLHTLMAKRVGGGSMIEDDNEPLS</sequence>
<comment type="function">
    <text>GRF is released by the hypothalamus and acts on the adenohypophyse to stimulate the secretion of growth hormone.</text>
</comment>
<comment type="subcellular location">
    <subcellularLocation>
        <location>Secreted</location>
    </subcellularLocation>
</comment>
<comment type="similarity">
    <text evidence="1">Belongs to the glucagon family.</text>
</comment>
<protein>
    <recommendedName>
        <fullName>Somatoliberin</fullName>
    </recommendedName>
    <alternativeName>
        <fullName>Growth hormone-releasing factor</fullName>
        <shortName>GRF</shortName>
    </alternativeName>
    <alternativeName>
        <fullName>Growth hormone-releasing hormone</fullName>
        <shortName>GHRH</shortName>
    </alternativeName>
</protein>
<keyword id="KW-0903">Direct protein sequencing</keyword>
<keyword id="KW-1185">Reference proteome</keyword>
<keyword id="KW-0964">Secreted</keyword>
<evidence type="ECO:0000305" key="1"/>
<organism>
    <name type="scientific">Cyprinus carpio</name>
    <name type="common">Common carp</name>
    <dbReference type="NCBI Taxonomy" id="7962"/>
    <lineage>
        <taxon>Eukaryota</taxon>
        <taxon>Metazoa</taxon>
        <taxon>Chordata</taxon>
        <taxon>Craniata</taxon>
        <taxon>Vertebrata</taxon>
        <taxon>Euteleostomi</taxon>
        <taxon>Actinopterygii</taxon>
        <taxon>Neopterygii</taxon>
        <taxon>Teleostei</taxon>
        <taxon>Ostariophysi</taxon>
        <taxon>Cypriniformes</taxon>
        <taxon>Cyprinidae</taxon>
        <taxon>Cyprininae</taxon>
        <taxon>Cyprinus</taxon>
    </lineage>
</organism>
<proteinExistence type="evidence at protein level"/>
<dbReference type="SMR" id="P42692"/>
<dbReference type="Proteomes" id="UP000694384">
    <property type="component" value="Unplaced"/>
</dbReference>
<dbReference type="Proteomes" id="UP000694427">
    <property type="component" value="Unplaced"/>
</dbReference>
<dbReference type="Proteomes" id="UP000694700">
    <property type="component" value="Unplaced"/>
</dbReference>
<dbReference type="Proteomes" id="UP000694701">
    <property type="component" value="Unplaced"/>
</dbReference>
<dbReference type="Proteomes" id="UP001155660">
    <property type="component" value="Unplaced"/>
</dbReference>
<dbReference type="GO" id="GO:0005576">
    <property type="term" value="C:extracellular region"/>
    <property type="evidence" value="ECO:0007669"/>
    <property type="project" value="UniProtKB-SubCell"/>
</dbReference>
<dbReference type="GO" id="GO:0043005">
    <property type="term" value="C:neuron projection"/>
    <property type="evidence" value="ECO:0007669"/>
    <property type="project" value="TreeGrafter"/>
</dbReference>
<dbReference type="GO" id="GO:0043204">
    <property type="term" value="C:perikaryon"/>
    <property type="evidence" value="ECO:0007669"/>
    <property type="project" value="TreeGrafter"/>
</dbReference>
<dbReference type="GO" id="GO:0005184">
    <property type="term" value="F:neuropeptide hormone activity"/>
    <property type="evidence" value="ECO:0007669"/>
    <property type="project" value="InterPro"/>
</dbReference>
<dbReference type="GO" id="GO:0051428">
    <property type="term" value="F:peptide hormone receptor binding"/>
    <property type="evidence" value="ECO:0007669"/>
    <property type="project" value="TreeGrafter"/>
</dbReference>
<dbReference type="GO" id="GO:0016521">
    <property type="term" value="F:pituitary adenylate cyclase activating polypeptide activity"/>
    <property type="evidence" value="ECO:0007669"/>
    <property type="project" value="TreeGrafter"/>
</dbReference>
<dbReference type="GO" id="GO:0007189">
    <property type="term" value="P:adenylate cyclase-activating G protein-coupled receptor signaling pathway"/>
    <property type="evidence" value="ECO:0007669"/>
    <property type="project" value="TreeGrafter"/>
</dbReference>
<dbReference type="GO" id="GO:0031175">
    <property type="term" value="P:neuron projection development"/>
    <property type="evidence" value="ECO:0007669"/>
    <property type="project" value="TreeGrafter"/>
</dbReference>
<dbReference type="GO" id="GO:0007218">
    <property type="term" value="P:neuropeptide signaling pathway"/>
    <property type="evidence" value="ECO:0007669"/>
    <property type="project" value="TreeGrafter"/>
</dbReference>
<dbReference type="GO" id="GO:0070374">
    <property type="term" value="P:positive regulation of ERK1 and ERK2 cascade"/>
    <property type="evidence" value="ECO:0007669"/>
    <property type="project" value="TreeGrafter"/>
</dbReference>
<dbReference type="GO" id="GO:0032880">
    <property type="term" value="P:regulation of protein localization"/>
    <property type="evidence" value="ECO:0007669"/>
    <property type="project" value="TreeGrafter"/>
</dbReference>
<dbReference type="InterPro" id="IPR000532">
    <property type="entry name" value="Glucagon_GIP_secretin_VIP"/>
</dbReference>
<dbReference type="InterPro" id="IPR046963">
    <property type="entry name" value="VIP/GHRH-like"/>
</dbReference>
<dbReference type="PANTHER" id="PTHR11213">
    <property type="entry name" value="GLUCAGON-FAMILY NEUROPEPTIDE"/>
    <property type="match status" value="1"/>
</dbReference>
<dbReference type="PANTHER" id="PTHR11213:SF1">
    <property type="entry name" value="PITUITARY ADENYLATE CYCLASE-ACTIVATING POLYPEPTIDE"/>
    <property type="match status" value="1"/>
</dbReference>
<dbReference type="Pfam" id="PF00123">
    <property type="entry name" value="Hormone_2"/>
    <property type="match status" value="1"/>
</dbReference>
<dbReference type="SMART" id="SM00070">
    <property type="entry name" value="GLUCA"/>
    <property type="match status" value="1"/>
</dbReference>
<dbReference type="PROSITE" id="PS00260">
    <property type="entry name" value="GLUCAGON"/>
    <property type="match status" value="1"/>
</dbReference>
<reference key="1">
    <citation type="journal article" date="1992" name="Neuroendocrinology">
        <title>Isolation and characterization of hypothalamic growth-hormone releasing factor from common carp, Cyprinus carpio.</title>
        <authorList>
            <person name="Vaughan J.M."/>
            <person name="Rivier J."/>
            <person name="Spiess J."/>
            <person name="Peng C."/>
            <person name="Chang J.P."/>
            <person name="Peter R.E."/>
            <person name="Vale W."/>
        </authorList>
    </citation>
    <scope>PROTEIN SEQUENCE</scope>
    <scope>SYNTHESIS</scope>
    <source>
        <tissue>Hypothalamus</tissue>
    </source>
</reference>